<keyword id="KW-0484">Methanogenesis</keyword>
<keyword id="KW-0560">Oxidoreductase</keyword>
<keyword id="KW-1185">Reference proteome</keyword>
<comment type="function">
    <text evidence="1">Part of a complex that catalyzes the reversible reduction of CoM-S-S-CoB to the thiol-coenzymes H-S-CoM (coenzyme M) and H-S-CoB (coenzyme B).</text>
</comment>
<comment type="catalytic activity">
    <reaction evidence="1">
        <text>coenzyme B + coenzyme M + 2 reduced [2Fe-2S]-[ferredoxin] + 2 H(+) = coenzyme M-coenzyme B heterodisulfide + 2 H2 + 2 oxidized [2Fe-2S]-[ferredoxin]</text>
        <dbReference type="Rhea" id="RHEA:55748"/>
        <dbReference type="Rhea" id="RHEA-COMP:10000"/>
        <dbReference type="Rhea" id="RHEA-COMP:10001"/>
        <dbReference type="ChEBI" id="CHEBI:15378"/>
        <dbReference type="ChEBI" id="CHEBI:18276"/>
        <dbReference type="ChEBI" id="CHEBI:33737"/>
        <dbReference type="ChEBI" id="CHEBI:33738"/>
        <dbReference type="ChEBI" id="CHEBI:58319"/>
        <dbReference type="ChEBI" id="CHEBI:58411"/>
        <dbReference type="ChEBI" id="CHEBI:58596"/>
        <dbReference type="EC" id="1.8.98.5"/>
    </reaction>
</comment>
<comment type="pathway">
    <text evidence="1">Cofactor metabolism; coenzyme M-coenzyme B heterodisulfide reduction; coenzyme B and coenzyme M from coenzyme M-coenzyme B heterodisulfide: step 1/1.</text>
</comment>
<comment type="subunit">
    <text evidence="1">The heterodisulfide reductase is composed of three subunits; HdrA, HdrB and HdrC. It forms a complex with the F420-non-reducing hydrogenase (Mvh), which provides the reducing equivalents to the heterodisulfide reductase.</text>
</comment>
<comment type="similarity">
    <text evidence="2">Belongs to the HdrB family.</text>
</comment>
<name>HDRB_METTH</name>
<protein>
    <recommendedName>
        <fullName evidence="1">H(2):CoB-CoM heterodisulfide,ferredoxin reductase subunit B</fullName>
        <ecNumber evidence="1">1.8.98.5</ecNumber>
    </recommendedName>
    <alternativeName>
        <fullName evidence="1">CoB--CoM heterodisulfide reductase subunit B</fullName>
    </alternativeName>
</protein>
<gene>
    <name type="primary">hdrB</name>
    <name type="ordered locus">MTH_1879</name>
</gene>
<evidence type="ECO:0000250" key="1">
    <source>
        <dbReference type="UniProtKB" id="Q50755"/>
    </source>
</evidence>
<evidence type="ECO:0000305" key="2"/>
<reference key="1">
    <citation type="journal article" date="1997" name="J. Bacteriol.">
        <title>Complete genome sequence of Methanobacterium thermoautotrophicum deltaH: functional analysis and comparative genomics.</title>
        <authorList>
            <person name="Smith D.R."/>
            <person name="Doucette-Stamm L.A."/>
            <person name="Deloughery C."/>
            <person name="Lee H.-M."/>
            <person name="Dubois J."/>
            <person name="Aldredge T."/>
            <person name="Bashirzadeh R."/>
            <person name="Blakely D."/>
            <person name="Cook R."/>
            <person name="Gilbert K."/>
            <person name="Harrison D."/>
            <person name="Hoang L."/>
            <person name="Keagle P."/>
            <person name="Lumm W."/>
            <person name="Pothier B."/>
            <person name="Qiu D."/>
            <person name="Spadafora R."/>
            <person name="Vicare R."/>
            <person name="Wang Y."/>
            <person name="Wierzbowski J."/>
            <person name="Gibson R."/>
            <person name="Jiwani N."/>
            <person name="Caruso A."/>
            <person name="Bush D."/>
            <person name="Safer H."/>
            <person name="Patwell D."/>
            <person name="Prabhakar S."/>
            <person name="McDougall S."/>
            <person name="Shimer G."/>
            <person name="Goyal A."/>
            <person name="Pietrovski S."/>
            <person name="Church G.M."/>
            <person name="Daniels C.J."/>
            <person name="Mao J.-I."/>
            <person name="Rice P."/>
            <person name="Noelling J."/>
            <person name="Reeve J.N."/>
        </authorList>
    </citation>
    <scope>NUCLEOTIDE SEQUENCE [LARGE SCALE GENOMIC DNA]</scope>
    <source>
        <strain>ATCC 29096 / DSM 1053 / JCM 10044 / NBRC 100330 / Delta H</strain>
    </source>
</reference>
<feature type="chain" id="PRO_0000150069" description="H(2):CoB-CoM heterodisulfide,ferredoxin reductase subunit B">
    <location>
        <begin position="1"/>
        <end position="302"/>
    </location>
</feature>
<organism>
    <name type="scientific">Methanothermobacter thermautotrophicus (strain ATCC 29096 / DSM 1053 / JCM 10044 / NBRC 100330 / Delta H)</name>
    <name type="common">Methanobacterium thermoautotrophicum</name>
    <dbReference type="NCBI Taxonomy" id="187420"/>
    <lineage>
        <taxon>Archaea</taxon>
        <taxon>Methanobacteriati</taxon>
        <taxon>Methanobacteriota</taxon>
        <taxon>Methanomada group</taxon>
        <taxon>Methanobacteria</taxon>
        <taxon>Methanobacteriales</taxon>
        <taxon>Methanobacteriaceae</taxon>
        <taxon>Methanothermobacter</taxon>
    </lineage>
</organism>
<accession>O27907</accession>
<sequence>MEIAYFLGCIMNNRYPGIEKATRVLFDKLGIELKDMEGAFCCPAPGVFGSFDKTTWAAIAARNITIAEEMGSDVMTECNGCFGSLFEANHLLKEDEEMRAKINEILKEAGREYKGEINVRHLAEILYNDVGLDKLSEVVEKPLNLNVAVHYGCHFLKPSEEINIDNPERPTILDELVEVTGAKSVDYKDKMMCCGAGGGVRSRDLDVALDFTMEKLRNMKEAGVDAIVNVCPFCHLQFDVGQMEIKDKFGEEFDIPVLHLAQLLGLAMGLPKEDLVVDAHQVCVDECLEKLEELDRLAPGSG</sequence>
<proteinExistence type="inferred from homology"/>
<dbReference type="EC" id="1.8.98.5" evidence="1"/>
<dbReference type="EMBL" id="AE000666">
    <property type="protein sequence ID" value="AAB86345.1"/>
    <property type="molecule type" value="Genomic_DNA"/>
</dbReference>
<dbReference type="PIR" id="D69118">
    <property type="entry name" value="D69118"/>
</dbReference>
<dbReference type="RefSeq" id="WP_010877481.1">
    <property type="nucleotide sequence ID" value="NC_000916.1"/>
</dbReference>
<dbReference type="SMR" id="O27907"/>
<dbReference type="FunCoup" id="O27907">
    <property type="interactions" value="66"/>
</dbReference>
<dbReference type="IntAct" id="O27907">
    <property type="interactions" value="1"/>
</dbReference>
<dbReference type="STRING" id="187420.MTH_1879"/>
<dbReference type="PaxDb" id="187420-MTH_1879"/>
<dbReference type="EnsemblBacteria" id="AAB86345">
    <property type="protein sequence ID" value="AAB86345"/>
    <property type="gene ID" value="MTH_1879"/>
</dbReference>
<dbReference type="GeneID" id="1470964"/>
<dbReference type="GeneID" id="77402391"/>
<dbReference type="KEGG" id="mth:MTH_1879"/>
<dbReference type="PATRIC" id="fig|187420.15.peg.1834"/>
<dbReference type="HOGENOM" id="CLU_052147_1_0_2"/>
<dbReference type="InParanoid" id="O27907"/>
<dbReference type="BioCyc" id="MetaCyc:HDRBMAUTO-MONOMER"/>
<dbReference type="UniPathway" id="UPA00647">
    <property type="reaction ID" value="UER00700"/>
</dbReference>
<dbReference type="Proteomes" id="UP000005223">
    <property type="component" value="Chromosome"/>
</dbReference>
<dbReference type="GO" id="GO:0051912">
    <property type="term" value="F:CoB--CoM heterodisulfide reductase activity"/>
    <property type="evidence" value="ECO:0007669"/>
    <property type="project" value="InterPro"/>
</dbReference>
<dbReference type="GO" id="GO:0015948">
    <property type="term" value="P:methanogenesis"/>
    <property type="evidence" value="ECO:0007669"/>
    <property type="project" value="UniProtKB-KW"/>
</dbReference>
<dbReference type="FunFam" id="3.40.50.11810:FF:000001">
    <property type="entry name" value="H(2):CoB-CoM heterodisulfide,ferredoxin reductase subunit B"/>
    <property type="match status" value="1"/>
</dbReference>
<dbReference type="Gene3D" id="1.20.1050.140">
    <property type="match status" value="1"/>
</dbReference>
<dbReference type="Gene3D" id="3.40.50.11810">
    <property type="match status" value="1"/>
</dbReference>
<dbReference type="InterPro" id="IPR017678">
    <property type="entry name" value="CoB/CoM_hetero-S_Rdtase_bsu"/>
</dbReference>
<dbReference type="InterPro" id="IPR004017">
    <property type="entry name" value="Cys_rich_dom"/>
</dbReference>
<dbReference type="InterPro" id="IPR051278">
    <property type="entry name" value="HdrB/HdrD_reductase"/>
</dbReference>
<dbReference type="NCBIfam" id="TIGR03288">
    <property type="entry name" value="CoB_CoM_SS_B"/>
    <property type="match status" value="1"/>
</dbReference>
<dbReference type="PANTHER" id="PTHR42947">
    <property type="entry name" value="COB--COM HETERODISULFIDE REDUCTASE SUBUNIT B 1"/>
    <property type="match status" value="1"/>
</dbReference>
<dbReference type="PANTHER" id="PTHR42947:SF1">
    <property type="entry name" value="COB--COM HETERODISULFIDE REDUCTASE SUBUNIT B 1"/>
    <property type="match status" value="1"/>
</dbReference>
<dbReference type="Pfam" id="PF02754">
    <property type="entry name" value="CCG"/>
    <property type="match status" value="2"/>
</dbReference>